<keyword id="KW-0054">Arabinose catabolism</keyword>
<keyword id="KW-0067">ATP-binding</keyword>
<keyword id="KW-0119">Carbohydrate metabolism</keyword>
<keyword id="KW-0418">Kinase</keyword>
<keyword id="KW-0547">Nucleotide-binding</keyword>
<keyword id="KW-0808">Transferase</keyword>
<evidence type="ECO:0000255" key="1">
    <source>
        <dbReference type="HAMAP-Rule" id="MF_00520"/>
    </source>
</evidence>
<proteinExistence type="inferred from homology"/>
<comment type="catalytic activity">
    <reaction evidence="1">
        <text>D-ribulose + ATP = D-ribulose 5-phosphate + ADP + H(+)</text>
        <dbReference type="Rhea" id="RHEA:17601"/>
        <dbReference type="ChEBI" id="CHEBI:15378"/>
        <dbReference type="ChEBI" id="CHEBI:17173"/>
        <dbReference type="ChEBI" id="CHEBI:30616"/>
        <dbReference type="ChEBI" id="CHEBI:58121"/>
        <dbReference type="ChEBI" id="CHEBI:456216"/>
        <dbReference type="EC" id="2.7.1.16"/>
    </reaction>
</comment>
<comment type="catalytic activity">
    <reaction evidence="1">
        <text>L-ribulose + ATP = L-ribulose 5-phosphate + ADP + H(+)</text>
        <dbReference type="Rhea" id="RHEA:22072"/>
        <dbReference type="ChEBI" id="CHEBI:15378"/>
        <dbReference type="ChEBI" id="CHEBI:16880"/>
        <dbReference type="ChEBI" id="CHEBI:30616"/>
        <dbReference type="ChEBI" id="CHEBI:58226"/>
        <dbReference type="ChEBI" id="CHEBI:456216"/>
        <dbReference type="EC" id="2.7.1.16"/>
    </reaction>
</comment>
<comment type="pathway">
    <text evidence="1">Carbohydrate degradation; L-arabinose degradation via L-ribulose; D-xylulose 5-phosphate from L-arabinose (bacterial route): step 2/3.</text>
</comment>
<comment type="similarity">
    <text evidence="1">Belongs to the ribulokinase family.</text>
</comment>
<accession>B6HZ43</accession>
<organism>
    <name type="scientific">Escherichia coli (strain SE11)</name>
    <dbReference type="NCBI Taxonomy" id="409438"/>
    <lineage>
        <taxon>Bacteria</taxon>
        <taxon>Pseudomonadati</taxon>
        <taxon>Pseudomonadota</taxon>
        <taxon>Gammaproteobacteria</taxon>
        <taxon>Enterobacterales</taxon>
        <taxon>Enterobacteriaceae</taxon>
        <taxon>Escherichia</taxon>
    </lineage>
</organism>
<reference key="1">
    <citation type="journal article" date="2008" name="DNA Res.">
        <title>Complete genome sequence and comparative analysis of the wild-type commensal Escherichia coli strain SE11 isolated from a healthy adult.</title>
        <authorList>
            <person name="Oshima K."/>
            <person name="Toh H."/>
            <person name="Ogura Y."/>
            <person name="Sasamoto H."/>
            <person name="Morita H."/>
            <person name="Park S.-H."/>
            <person name="Ooka T."/>
            <person name="Iyoda S."/>
            <person name="Taylor T.D."/>
            <person name="Hayashi T."/>
            <person name="Itoh K."/>
            <person name="Hattori M."/>
        </authorList>
    </citation>
    <scope>NUCLEOTIDE SEQUENCE [LARGE SCALE GENOMIC DNA]</scope>
    <source>
        <strain>SE11</strain>
    </source>
</reference>
<name>ARAB_ECOSE</name>
<sequence>MAIAIGLDFGSDSVRALAVDCASGEEIATSVEWYPRWQKGQFCDAPNNQFRHHPRDYIESMEAALKTVLAELSVEQRAAVVGIGVDTTGSTPAPIDADGNVLALRPEFAENPNAMFVLWKDHTAVEEAEEITRLCHAPGNVDYSRYIGGIYSSEWFWAKILHVTRQDSAVAQSAASWIELCDWVPALLSGTTRPQDIRRGRCSAGHKSLWHESWGGLPPASFFDELDPILNRHLPSPLFTDTWTADIPVGTLCPEWAQRLGLPESVVISGGAFDCHMGAVGAGAQPNALVKVIGTSTCDILIADKQSVGERAVKGICGQVDGSVVPGFIGLEAGQSAFGDIYAWFGRVLGWPLEQLAAQHPELKAQINASQKQLLPALTEAWAKNPSLDHLPVVLDWFNGRRTPNANQRLKGVITDLNLATDAPLLFGGLIAATAFGARAIMECFTDQGIAVNNVMALGGIARKNQVIMQACCDVLNRPLQIVASDQCCALGAAIFAAVAAKVHADIPSAQQKMASAVEKTLQPRSEQAQRFEQLYRRYQQWAMSAEQHYLPTSAPAQAAQAVATL</sequence>
<gene>
    <name evidence="1" type="primary">araB</name>
    <name type="ordered locus">ECSE_0063</name>
</gene>
<protein>
    <recommendedName>
        <fullName evidence="1">Ribulokinase</fullName>
        <ecNumber evidence="1">2.7.1.16</ecNumber>
    </recommendedName>
</protein>
<feature type="chain" id="PRO_1000127631" description="Ribulokinase">
    <location>
        <begin position="1"/>
        <end position="566"/>
    </location>
</feature>
<dbReference type="EC" id="2.7.1.16" evidence="1"/>
<dbReference type="EMBL" id="AP009240">
    <property type="protein sequence ID" value="BAG75587.1"/>
    <property type="molecule type" value="Genomic_DNA"/>
</dbReference>
<dbReference type="RefSeq" id="WP_000951787.1">
    <property type="nucleotide sequence ID" value="NC_011415.1"/>
</dbReference>
<dbReference type="SMR" id="B6HZ43"/>
<dbReference type="KEGG" id="ecy:ECSE_0063"/>
<dbReference type="HOGENOM" id="CLU_009281_9_1_6"/>
<dbReference type="UniPathway" id="UPA00145">
    <property type="reaction ID" value="UER00566"/>
</dbReference>
<dbReference type="Proteomes" id="UP000008199">
    <property type="component" value="Chromosome"/>
</dbReference>
<dbReference type="GO" id="GO:0005737">
    <property type="term" value="C:cytoplasm"/>
    <property type="evidence" value="ECO:0007669"/>
    <property type="project" value="TreeGrafter"/>
</dbReference>
<dbReference type="GO" id="GO:0005524">
    <property type="term" value="F:ATP binding"/>
    <property type="evidence" value="ECO:0007669"/>
    <property type="project" value="UniProtKB-KW"/>
</dbReference>
<dbReference type="GO" id="GO:0019150">
    <property type="term" value="F:D-ribulokinase activity"/>
    <property type="evidence" value="ECO:0007669"/>
    <property type="project" value="RHEA"/>
</dbReference>
<dbReference type="GO" id="GO:0008741">
    <property type="term" value="F:ribulokinase activity"/>
    <property type="evidence" value="ECO:0007669"/>
    <property type="project" value="UniProtKB-UniRule"/>
</dbReference>
<dbReference type="GO" id="GO:0019569">
    <property type="term" value="P:L-arabinose catabolic process to xylulose 5-phosphate"/>
    <property type="evidence" value="ECO:0007669"/>
    <property type="project" value="UniProtKB-UniRule"/>
</dbReference>
<dbReference type="CDD" id="cd07781">
    <property type="entry name" value="ASKHA_NBD_FGGY_L-RBK"/>
    <property type="match status" value="1"/>
</dbReference>
<dbReference type="Gene3D" id="1.20.58.2240">
    <property type="match status" value="1"/>
</dbReference>
<dbReference type="Gene3D" id="3.30.420.40">
    <property type="match status" value="1"/>
</dbReference>
<dbReference type="HAMAP" id="MF_00520">
    <property type="entry name" value="Ribulokinase"/>
    <property type="match status" value="1"/>
</dbReference>
<dbReference type="InterPro" id="IPR043129">
    <property type="entry name" value="ATPase_NBD"/>
</dbReference>
<dbReference type="InterPro" id="IPR018485">
    <property type="entry name" value="FGGY_C"/>
</dbReference>
<dbReference type="InterPro" id="IPR005929">
    <property type="entry name" value="Ribulokinase"/>
</dbReference>
<dbReference type="NCBIfam" id="TIGR01234">
    <property type="entry name" value="L-ribulokinase"/>
    <property type="match status" value="1"/>
</dbReference>
<dbReference type="NCBIfam" id="NF003154">
    <property type="entry name" value="PRK04123.1"/>
    <property type="match status" value="1"/>
</dbReference>
<dbReference type="PANTHER" id="PTHR43435:SF4">
    <property type="entry name" value="FGGY CARBOHYDRATE KINASE DOMAIN-CONTAINING PROTEIN"/>
    <property type="match status" value="1"/>
</dbReference>
<dbReference type="PANTHER" id="PTHR43435">
    <property type="entry name" value="RIBULOKINASE"/>
    <property type="match status" value="1"/>
</dbReference>
<dbReference type="Pfam" id="PF02782">
    <property type="entry name" value="FGGY_C"/>
    <property type="match status" value="1"/>
</dbReference>
<dbReference type="SUPFAM" id="SSF53067">
    <property type="entry name" value="Actin-like ATPase domain"/>
    <property type="match status" value="2"/>
</dbReference>